<accession>A9KX72</accession>
<protein>
    <recommendedName>
        <fullName evidence="1">Cyclic pyranopterin monophosphate synthase</fullName>
        <ecNumber evidence="1">4.6.1.17</ecNumber>
    </recommendedName>
    <alternativeName>
        <fullName evidence="1">Molybdenum cofactor biosynthesis protein C</fullName>
    </alternativeName>
</protein>
<keyword id="KW-0456">Lyase</keyword>
<keyword id="KW-0501">Molybdenum cofactor biosynthesis</keyword>
<gene>
    <name evidence="1" type="primary">moaC</name>
    <name type="ordered locus">Sbal195_0286</name>
</gene>
<comment type="function">
    <text evidence="1">Catalyzes the conversion of (8S)-3',8-cyclo-7,8-dihydroguanosine 5'-triphosphate to cyclic pyranopterin monophosphate (cPMP).</text>
</comment>
<comment type="catalytic activity">
    <reaction evidence="1">
        <text>(8S)-3',8-cyclo-7,8-dihydroguanosine 5'-triphosphate = cyclic pyranopterin phosphate + diphosphate</text>
        <dbReference type="Rhea" id="RHEA:49580"/>
        <dbReference type="ChEBI" id="CHEBI:33019"/>
        <dbReference type="ChEBI" id="CHEBI:59648"/>
        <dbReference type="ChEBI" id="CHEBI:131766"/>
        <dbReference type="EC" id="4.6.1.17"/>
    </reaction>
</comment>
<comment type="pathway">
    <text evidence="1">Cofactor biosynthesis; molybdopterin biosynthesis.</text>
</comment>
<comment type="subunit">
    <text evidence="1">Homohexamer; trimer of dimers.</text>
</comment>
<comment type="similarity">
    <text evidence="1">Belongs to the MoaC family.</text>
</comment>
<sequence>MSNVFTHINADGNAHMVDVTEKAITEREARAEAFIEMASTTLEMIMSGSHHKGDVFATARIAGIQAAKKTSDLIPLCHPLMLTKVEVDLEAQPEHNRVRITSLCKLSGKTGVEMEALTAASVAALTIYDMCKAVQKDMVISQVRLLEKRGGKSGHFKV</sequence>
<reference key="1">
    <citation type="submission" date="2007-11" db="EMBL/GenBank/DDBJ databases">
        <title>Complete sequence of chromosome of Shewanella baltica OS195.</title>
        <authorList>
            <consortium name="US DOE Joint Genome Institute"/>
            <person name="Copeland A."/>
            <person name="Lucas S."/>
            <person name="Lapidus A."/>
            <person name="Barry K."/>
            <person name="Glavina del Rio T."/>
            <person name="Dalin E."/>
            <person name="Tice H."/>
            <person name="Pitluck S."/>
            <person name="Chain P."/>
            <person name="Malfatti S."/>
            <person name="Shin M."/>
            <person name="Vergez L."/>
            <person name="Schmutz J."/>
            <person name="Larimer F."/>
            <person name="Land M."/>
            <person name="Hauser L."/>
            <person name="Kyrpides N."/>
            <person name="Kim E."/>
            <person name="Brettar I."/>
            <person name="Rodrigues J."/>
            <person name="Konstantinidis K."/>
            <person name="Klappenbach J."/>
            <person name="Hofle M."/>
            <person name="Tiedje J."/>
            <person name="Richardson P."/>
        </authorList>
    </citation>
    <scope>NUCLEOTIDE SEQUENCE [LARGE SCALE GENOMIC DNA]</scope>
    <source>
        <strain>OS195</strain>
    </source>
</reference>
<proteinExistence type="inferred from homology"/>
<feature type="chain" id="PRO_1000085685" description="Cyclic pyranopterin monophosphate synthase">
    <location>
        <begin position="1"/>
        <end position="158"/>
    </location>
</feature>
<feature type="active site" evidence="1">
    <location>
        <position position="129"/>
    </location>
</feature>
<feature type="binding site" evidence="1">
    <location>
        <begin position="76"/>
        <end position="78"/>
    </location>
    <ligand>
        <name>substrate</name>
    </ligand>
</feature>
<feature type="binding site" evidence="1">
    <location>
        <begin position="114"/>
        <end position="115"/>
    </location>
    <ligand>
        <name>substrate</name>
    </ligand>
</feature>
<evidence type="ECO:0000255" key="1">
    <source>
        <dbReference type="HAMAP-Rule" id="MF_01224"/>
    </source>
</evidence>
<dbReference type="EC" id="4.6.1.17" evidence="1"/>
<dbReference type="EMBL" id="CP000891">
    <property type="protein sequence ID" value="ABX47468.1"/>
    <property type="molecule type" value="Genomic_DNA"/>
</dbReference>
<dbReference type="RefSeq" id="WP_006086547.1">
    <property type="nucleotide sequence ID" value="NC_009997.1"/>
</dbReference>
<dbReference type="SMR" id="A9KX72"/>
<dbReference type="GeneID" id="11770637"/>
<dbReference type="KEGG" id="sbn:Sbal195_0286"/>
<dbReference type="HOGENOM" id="CLU_074693_1_1_6"/>
<dbReference type="UniPathway" id="UPA00344"/>
<dbReference type="Proteomes" id="UP000000770">
    <property type="component" value="Chromosome"/>
</dbReference>
<dbReference type="GO" id="GO:0061799">
    <property type="term" value="F:cyclic pyranopterin monophosphate synthase activity"/>
    <property type="evidence" value="ECO:0007669"/>
    <property type="project" value="UniProtKB-UniRule"/>
</dbReference>
<dbReference type="GO" id="GO:0006777">
    <property type="term" value="P:Mo-molybdopterin cofactor biosynthetic process"/>
    <property type="evidence" value="ECO:0007669"/>
    <property type="project" value="UniProtKB-UniRule"/>
</dbReference>
<dbReference type="CDD" id="cd01420">
    <property type="entry name" value="MoaC_PE"/>
    <property type="match status" value="1"/>
</dbReference>
<dbReference type="FunFam" id="3.30.70.640:FF:000001">
    <property type="entry name" value="Cyclic pyranopterin monophosphate synthase"/>
    <property type="match status" value="1"/>
</dbReference>
<dbReference type="Gene3D" id="3.30.70.640">
    <property type="entry name" value="Molybdopterin cofactor biosynthesis C (MoaC) domain"/>
    <property type="match status" value="1"/>
</dbReference>
<dbReference type="HAMAP" id="MF_01224_B">
    <property type="entry name" value="MoaC_B"/>
    <property type="match status" value="1"/>
</dbReference>
<dbReference type="InterPro" id="IPR023045">
    <property type="entry name" value="MoaC"/>
</dbReference>
<dbReference type="InterPro" id="IPR047594">
    <property type="entry name" value="MoaC_bact/euk"/>
</dbReference>
<dbReference type="InterPro" id="IPR036522">
    <property type="entry name" value="MoaC_sf"/>
</dbReference>
<dbReference type="InterPro" id="IPR050105">
    <property type="entry name" value="MoCo_biosynth_MoaA/MoaC"/>
</dbReference>
<dbReference type="InterPro" id="IPR002820">
    <property type="entry name" value="Mopterin_CF_biosynth-C_dom"/>
</dbReference>
<dbReference type="NCBIfam" id="TIGR00581">
    <property type="entry name" value="moaC"/>
    <property type="match status" value="1"/>
</dbReference>
<dbReference type="NCBIfam" id="NF006870">
    <property type="entry name" value="PRK09364.1"/>
    <property type="match status" value="1"/>
</dbReference>
<dbReference type="PANTHER" id="PTHR22960">
    <property type="entry name" value="MOLYBDOPTERIN COFACTOR SYNTHESIS PROTEIN A"/>
    <property type="match status" value="1"/>
</dbReference>
<dbReference type="Pfam" id="PF01967">
    <property type="entry name" value="MoaC"/>
    <property type="match status" value="1"/>
</dbReference>
<dbReference type="SUPFAM" id="SSF55040">
    <property type="entry name" value="Molybdenum cofactor biosynthesis protein C, MoaC"/>
    <property type="match status" value="1"/>
</dbReference>
<name>MOAC_SHEB9</name>
<organism>
    <name type="scientific">Shewanella baltica (strain OS195)</name>
    <dbReference type="NCBI Taxonomy" id="399599"/>
    <lineage>
        <taxon>Bacteria</taxon>
        <taxon>Pseudomonadati</taxon>
        <taxon>Pseudomonadota</taxon>
        <taxon>Gammaproteobacteria</taxon>
        <taxon>Alteromonadales</taxon>
        <taxon>Shewanellaceae</taxon>
        <taxon>Shewanella</taxon>
    </lineage>
</organism>